<sequence>MATAAASSLLKSSFAGSRLPAATRTTPASLVVATGPRGAGAGPICASMSMSSSNPPYDLTSFRFSPIKESIVSREMTRRYMTDMITYADTDVVIVGAGSAGLSCAYELSKDPAVSIAIVEQSVSPGGGAWLGGQLFSAMVVRKPAHLFLDELGVAYDEAEDYVVIKHAALFTSTVMSLLLARPNVKLFNAVAVEDLIVRGGRVGGVVTNWALVSMNHDTQSCMDPNVMEAKVVVSSCGHDGPFGATGVKRLQDIGMISAVPGMKALDMNTAEDEIVRLTREVVPGMIVTGMEVAEIDGAPRMGPTFGAMMISGQKAAHLALKALGRPNAVDGTMSPPLREELMIAYKDDEVVDA</sequence>
<keyword id="KW-0150">Chloroplast</keyword>
<keyword id="KW-0408">Iron</keyword>
<keyword id="KW-0479">Metal-binding</keyword>
<keyword id="KW-0520">NAD</keyword>
<keyword id="KW-0934">Plastid</keyword>
<keyword id="KW-1185">Reference proteome</keyword>
<keyword id="KW-0784">Thiamine biosynthesis</keyword>
<keyword id="KW-0808">Transferase</keyword>
<keyword id="KW-0809">Transit peptide</keyword>
<protein>
    <recommendedName>
        <fullName evidence="1">Thiamine thiazole synthase 1, chloroplastic</fullName>
        <ecNumber evidence="1">2.4.2.60</ecNumber>
    </recommendedName>
    <alternativeName>
        <fullName evidence="1">Thiazole biosynthetic enzyme 1</fullName>
    </alternativeName>
</protein>
<feature type="transit peptide" description="Chloroplast" evidence="1">
    <location>
        <begin position="1"/>
        <end position="45"/>
    </location>
</feature>
<feature type="chain" id="PRO_0000034062" description="Thiamine thiazole synthase 1, chloroplastic">
    <location>
        <begin position="46"/>
        <end position="354"/>
    </location>
</feature>
<feature type="binding site" evidence="1">
    <location>
        <position position="100"/>
    </location>
    <ligand>
        <name>substrate</name>
    </ligand>
</feature>
<feature type="binding site" evidence="1">
    <location>
        <begin position="120"/>
        <end position="121"/>
    </location>
    <ligand>
        <name>substrate</name>
    </ligand>
</feature>
<feature type="binding site" evidence="1">
    <location>
        <position position="128"/>
    </location>
    <ligand>
        <name>substrate</name>
    </ligand>
</feature>
<feature type="binding site" evidence="1">
    <location>
        <position position="193"/>
    </location>
    <ligand>
        <name>substrate</name>
    </ligand>
</feature>
<feature type="binding site" evidence="1">
    <location>
        <position position="224"/>
    </location>
    <ligand>
        <name>substrate</name>
    </ligand>
</feature>
<feature type="binding site" evidence="1">
    <location>
        <position position="239"/>
    </location>
    <ligand>
        <name>substrate</name>
    </ligand>
</feature>
<feature type="binding site" evidence="1">
    <location>
        <position position="291"/>
    </location>
    <ligand>
        <name>substrate</name>
    </ligand>
</feature>
<feature type="binding site" evidence="1">
    <location>
        <begin position="301"/>
        <end position="303"/>
    </location>
    <ligand>
        <name>substrate</name>
    </ligand>
</feature>
<feature type="modified residue" description="2,3-didehydroalanine (Cys)" evidence="1">
    <location>
        <position position="222"/>
    </location>
</feature>
<proteinExistence type="evidence at transcript level"/>
<accession>Q41738</accession>
<reference key="1">
    <citation type="journal article" date="1995" name="Plant Mol. Biol.">
        <title>Evidence for the thiamine biosynthetic pathway in higher-plant plastids and its developmental regulation.</title>
        <authorList>
            <person name="Belanger F.C."/>
            <person name="Leustek T."/>
            <person name="Chu B."/>
            <person name="Kriz A.L."/>
        </authorList>
    </citation>
    <scope>NUCLEOTIDE SEQUENCE [MRNA]</scope>
    <scope>FUNCTION</scope>
    <scope>SUBCELLULAR LOCATION</scope>
    <source>
        <tissue>Seedling</tissue>
    </source>
</reference>
<evidence type="ECO:0000255" key="1">
    <source>
        <dbReference type="HAMAP-Rule" id="MF_03158"/>
    </source>
</evidence>
<evidence type="ECO:0000269" key="2">
    <source>
    </source>
</evidence>
<comment type="function">
    <text evidence="1 2">Involved in biosynthesis of the thiamine precursor thiazole. Catalyzes the conversion of NAD and glycine to adenosine diphosphate 5-(2-hydroxyethyl)-4-methylthiazole-2-carboxylic acid (ADT), an adenylated thiazole intermediate. The reaction includes an iron-dependent sulfide transfer from a conserved cysteine residue of the protein to a thiazole intermediate. The enzyme can only undergo a single turnover, which suggests it is a suicide enzyme. May have additional roles in adaptation to various stress conditions and in DNA damage tolerance.</text>
</comment>
<comment type="catalytic activity">
    <reaction evidence="1">
        <text>[ADP-thiazole synthase]-L-cysteine + glycine + NAD(+) = [ADP-thiazole synthase]-dehydroalanine + ADP-5-ethyl-4-methylthiazole-2-carboxylate + nicotinamide + 3 H2O + 2 H(+)</text>
        <dbReference type="Rhea" id="RHEA:55708"/>
        <dbReference type="Rhea" id="RHEA-COMP:14264"/>
        <dbReference type="Rhea" id="RHEA-COMP:14265"/>
        <dbReference type="ChEBI" id="CHEBI:15377"/>
        <dbReference type="ChEBI" id="CHEBI:15378"/>
        <dbReference type="ChEBI" id="CHEBI:17154"/>
        <dbReference type="ChEBI" id="CHEBI:29950"/>
        <dbReference type="ChEBI" id="CHEBI:57305"/>
        <dbReference type="ChEBI" id="CHEBI:57540"/>
        <dbReference type="ChEBI" id="CHEBI:90873"/>
        <dbReference type="ChEBI" id="CHEBI:139151"/>
        <dbReference type="EC" id="2.4.2.60"/>
    </reaction>
</comment>
<comment type="cofactor">
    <cofactor evidence="1">
        <name>Fe cation</name>
        <dbReference type="ChEBI" id="CHEBI:24875"/>
    </cofactor>
    <text evidence="1">Binds 1 Fe cation per subunit.</text>
</comment>
<comment type="subunit">
    <text evidence="1">Homooctamer.</text>
</comment>
<comment type="subcellular location">
    <subcellularLocation>
        <location evidence="1 2">Plastid</location>
        <location evidence="1 2">Chloroplast</location>
    </subcellularLocation>
</comment>
<comment type="tissue specificity">
    <text>Highest expression in developing embryos and green leaves and a very low level expression seen in endosperm, roots, etiolated shoots and immature ears.</text>
</comment>
<comment type="developmental stage">
    <text>During embryo development, expression increases from 15-21 days after pollination and decreases slightly at day 24 and this level is maintained until day 36.</text>
</comment>
<comment type="PTM">
    <text evidence="1">During the catalytic reaction, a sulfide is transferred from Cys-222 to a reaction intermediate, generating a dehydroalanine residue.</text>
</comment>
<comment type="similarity">
    <text evidence="1">Belongs to the THI4 family.</text>
</comment>
<gene>
    <name evidence="1" type="primary">THI1-1</name>
</gene>
<name>THI41_MAIZE</name>
<organism>
    <name type="scientific">Zea mays</name>
    <name type="common">Maize</name>
    <dbReference type="NCBI Taxonomy" id="4577"/>
    <lineage>
        <taxon>Eukaryota</taxon>
        <taxon>Viridiplantae</taxon>
        <taxon>Streptophyta</taxon>
        <taxon>Embryophyta</taxon>
        <taxon>Tracheophyta</taxon>
        <taxon>Spermatophyta</taxon>
        <taxon>Magnoliopsida</taxon>
        <taxon>Liliopsida</taxon>
        <taxon>Poales</taxon>
        <taxon>Poaceae</taxon>
        <taxon>PACMAD clade</taxon>
        <taxon>Panicoideae</taxon>
        <taxon>Andropogonodae</taxon>
        <taxon>Andropogoneae</taxon>
        <taxon>Tripsacinae</taxon>
        <taxon>Zea</taxon>
    </lineage>
</organism>
<dbReference type="EC" id="2.4.2.60" evidence="1"/>
<dbReference type="EMBL" id="U17350">
    <property type="protein sequence ID" value="AAA96738.1"/>
    <property type="molecule type" value="mRNA"/>
</dbReference>
<dbReference type="PIR" id="S61419">
    <property type="entry name" value="S61419"/>
</dbReference>
<dbReference type="RefSeq" id="NP_001105696.1">
    <property type="nucleotide sequence ID" value="NM_001112226.1"/>
</dbReference>
<dbReference type="SMR" id="Q41738"/>
<dbReference type="FunCoup" id="Q41738">
    <property type="interactions" value="1048"/>
</dbReference>
<dbReference type="STRING" id="4577.Q41738"/>
<dbReference type="PaxDb" id="4577-GRMZM2G018375_P01"/>
<dbReference type="EnsemblPlants" id="Zm00001eb356910_T003">
    <property type="protein sequence ID" value="Zm00001eb356910_P003"/>
    <property type="gene ID" value="Zm00001eb356910"/>
</dbReference>
<dbReference type="GeneID" id="542714"/>
<dbReference type="Gramene" id="Zm00001eb356910_T003">
    <property type="protein sequence ID" value="Zm00001eb356910_P003"/>
    <property type="gene ID" value="Zm00001eb356910"/>
</dbReference>
<dbReference type="KEGG" id="zma:542714"/>
<dbReference type="MaizeGDB" id="128724"/>
<dbReference type="eggNOG" id="KOG2960">
    <property type="taxonomic scope" value="Eukaryota"/>
</dbReference>
<dbReference type="InParanoid" id="Q41738"/>
<dbReference type="OMA" id="MFPRIVV"/>
<dbReference type="OrthoDB" id="410463at2759"/>
<dbReference type="Proteomes" id="UP000007305">
    <property type="component" value="Chromosome 8"/>
</dbReference>
<dbReference type="ExpressionAtlas" id="Q41738">
    <property type="expression patterns" value="baseline and differential"/>
</dbReference>
<dbReference type="GO" id="GO:0009570">
    <property type="term" value="C:chloroplast stroma"/>
    <property type="evidence" value="ECO:0007669"/>
    <property type="project" value="UniProtKB-UniRule"/>
</dbReference>
<dbReference type="GO" id="GO:0005829">
    <property type="term" value="C:cytosol"/>
    <property type="evidence" value="ECO:0007669"/>
    <property type="project" value="UniProtKB-UniRule"/>
</dbReference>
<dbReference type="GO" id="GO:0005739">
    <property type="term" value="C:mitochondrion"/>
    <property type="evidence" value="ECO:0007669"/>
    <property type="project" value="EnsemblPlants"/>
</dbReference>
<dbReference type="GO" id="GO:0010319">
    <property type="term" value="C:stromule"/>
    <property type="evidence" value="ECO:0007669"/>
    <property type="project" value="EnsemblPlants"/>
</dbReference>
<dbReference type="GO" id="GO:0160205">
    <property type="term" value="F:cysteine-dependent adenosine diphosphate thiazole synthase activity"/>
    <property type="evidence" value="ECO:0007669"/>
    <property type="project" value="UniProtKB-EC"/>
</dbReference>
<dbReference type="GO" id="GO:0005506">
    <property type="term" value="F:iron ion binding"/>
    <property type="evidence" value="ECO:0000318"/>
    <property type="project" value="GO_Central"/>
</dbReference>
<dbReference type="GO" id="GO:0019904">
    <property type="term" value="F:protein domain specific binding"/>
    <property type="evidence" value="ECO:0007669"/>
    <property type="project" value="EnsemblPlants"/>
</dbReference>
<dbReference type="GO" id="GO:0042803">
    <property type="term" value="F:protein homodimerization activity"/>
    <property type="evidence" value="ECO:0007669"/>
    <property type="project" value="EnsemblPlants"/>
</dbReference>
<dbReference type="GO" id="GO:0006974">
    <property type="term" value="P:DNA damage response"/>
    <property type="evidence" value="ECO:0007669"/>
    <property type="project" value="EnsemblPlants"/>
</dbReference>
<dbReference type="GO" id="GO:0009409">
    <property type="term" value="P:response to cold"/>
    <property type="evidence" value="ECO:0007669"/>
    <property type="project" value="EnsemblPlants"/>
</dbReference>
<dbReference type="GO" id="GO:0009228">
    <property type="term" value="P:thiamine biosynthetic process"/>
    <property type="evidence" value="ECO:0007669"/>
    <property type="project" value="UniProtKB-UniRule"/>
</dbReference>
<dbReference type="GO" id="GO:0052837">
    <property type="term" value="P:thiazole biosynthetic process"/>
    <property type="evidence" value="ECO:0000318"/>
    <property type="project" value="GO_Central"/>
</dbReference>
<dbReference type="FunFam" id="3.50.50.60:FF:000070">
    <property type="entry name" value="Thiamine thiazole synthase, chloroplastic"/>
    <property type="match status" value="1"/>
</dbReference>
<dbReference type="Gene3D" id="6.10.250.2840">
    <property type="match status" value="1"/>
</dbReference>
<dbReference type="Gene3D" id="3.50.50.60">
    <property type="entry name" value="FAD/NAD(P)-binding domain"/>
    <property type="match status" value="1"/>
</dbReference>
<dbReference type="HAMAP" id="MF_03158">
    <property type="entry name" value="THI4"/>
    <property type="match status" value="1"/>
</dbReference>
<dbReference type="InterPro" id="IPR036188">
    <property type="entry name" value="FAD/NAD-bd_sf"/>
</dbReference>
<dbReference type="InterPro" id="IPR027495">
    <property type="entry name" value="Sti35"/>
</dbReference>
<dbReference type="InterPro" id="IPR002922">
    <property type="entry name" value="Thi4_fam"/>
</dbReference>
<dbReference type="NCBIfam" id="TIGR00292">
    <property type="entry name" value="sulfide-dependent adenosine diphosphate thiazole synthase"/>
    <property type="match status" value="1"/>
</dbReference>
<dbReference type="PANTHER" id="PTHR43422">
    <property type="entry name" value="THIAMINE THIAZOLE SYNTHASE"/>
    <property type="match status" value="1"/>
</dbReference>
<dbReference type="PANTHER" id="PTHR43422:SF16">
    <property type="entry name" value="THIAMINE THIAZOLE SYNTHASE, CHLOROPLASTIC"/>
    <property type="match status" value="1"/>
</dbReference>
<dbReference type="Pfam" id="PF01946">
    <property type="entry name" value="Thi4"/>
    <property type="match status" value="1"/>
</dbReference>
<dbReference type="SUPFAM" id="SSF51905">
    <property type="entry name" value="FAD/NAD(P)-binding domain"/>
    <property type="match status" value="1"/>
</dbReference>